<proteinExistence type="evidence at protein level"/>
<name>PE2R3_RAT</name>
<feature type="chain" id="PRO_0000070062" description="Prostaglandin E2 receptor EP3 subtype">
    <location>
        <begin position="1"/>
        <end position="365"/>
    </location>
</feature>
<feature type="topological domain" description="Extracellular" evidence="2">
    <location>
        <begin position="1"/>
        <end position="30"/>
    </location>
</feature>
<feature type="transmembrane region" description="Helical; Name=1" evidence="2">
    <location>
        <begin position="31"/>
        <end position="55"/>
    </location>
</feature>
<feature type="topological domain" description="Cytoplasmic" evidence="2">
    <location>
        <begin position="56"/>
        <end position="68"/>
    </location>
</feature>
<feature type="transmembrane region" description="Helical; Name=2" evidence="2">
    <location>
        <begin position="69"/>
        <end position="89"/>
    </location>
</feature>
<feature type="topological domain" description="Extracellular" evidence="2">
    <location>
        <begin position="90"/>
        <end position="108"/>
    </location>
</feature>
<feature type="transmembrane region" description="Helical; Name=3" evidence="2">
    <location>
        <begin position="109"/>
        <end position="130"/>
    </location>
</feature>
<feature type="topological domain" description="Cytoplasmic" evidence="2">
    <location>
        <begin position="131"/>
        <end position="151"/>
    </location>
</feature>
<feature type="transmembrane region" description="Helical; Name=4" evidence="2">
    <location>
        <begin position="152"/>
        <end position="173"/>
    </location>
</feature>
<feature type="topological domain" description="Extracellular" evidence="2">
    <location>
        <begin position="174"/>
        <end position="203"/>
    </location>
</feature>
<feature type="transmembrane region" description="Helical; Name=5" evidence="2">
    <location>
        <begin position="204"/>
        <end position="229"/>
    </location>
</feature>
<feature type="topological domain" description="Cytoplasmic" evidence="2">
    <location>
        <begin position="230"/>
        <end position="259"/>
    </location>
</feature>
<feature type="transmembrane region" description="Helical; Name=6" evidence="2">
    <location>
        <begin position="260"/>
        <end position="283"/>
    </location>
</feature>
<feature type="topological domain" description="Extracellular" evidence="2">
    <location>
        <begin position="284"/>
        <end position="303"/>
    </location>
</feature>
<feature type="transmembrane region" description="Helical; Name=7" evidence="2">
    <location>
        <begin position="304"/>
        <end position="325"/>
    </location>
</feature>
<feature type="topological domain" description="Cytoplasmic" evidence="2">
    <location>
        <begin position="326"/>
        <end position="365"/>
    </location>
</feature>
<feature type="glycosylation site" description="N-linked (GlcNAc...) asparagine" evidence="2">
    <location>
        <position position="16"/>
    </location>
</feature>
<feature type="glycosylation site" description="N-linked (GlcNAc...) asparagine" evidence="2">
    <location>
        <position position="193"/>
    </location>
</feature>
<feature type="disulfide bond" evidence="3">
    <location>
        <begin position="107"/>
        <end position="184"/>
    </location>
</feature>
<feature type="splice variant" id="VSP_001949" description="In isoform Beta." evidence="7 9">
    <original>IRDHTNYASSSTSLPCPGSSVLMWSDQLER</original>
    <variation>MMNNLKRSFIAIPASLSMRISSPREG</variation>
    <location>
        <begin position="336"/>
        <end position="365"/>
    </location>
</feature>
<feature type="splice variant" id="VSP_001950" description="In isoform Gamma." evidence="8">
    <original>IRDHTNYASSSTSLPCPGSSVLMWSDQLER</original>
    <variation>VANAVSSCSSDQQKGQAISLSNEVVHPGP</variation>
    <location>
        <begin position="336"/>
        <end position="365"/>
    </location>
</feature>
<feature type="sequence variant">
    <original>P</original>
    <variation>RA</variation>
    <location>
        <position position="152"/>
    </location>
</feature>
<feature type="sequence conflict" description="In Ref. 3 and 4." evidence="10" ref="3 4">
    <original>V</original>
    <variation>S</variation>
    <location>
        <position position="51"/>
    </location>
</feature>
<feature type="sequence conflict" description="In Ref. 3; CAA58735." evidence="10" ref="3">
    <original>S</original>
    <variation>F</variation>
    <location>
        <position position="354"/>
    </location>
</feature>
<reference key="1">
    <citation type="journal article" date="1993" name="Biochem. Biophys. Res. Commun.">
        <title>Molecular cloning and intrarenal localization of rat prostaglandin E2 receptor EP3 subtype.</title>
        <authorList>
            <person name="Takeuchi K."/>
            <person name="Abe T."/>
            <person name="Takahashi N."/>
            <person name="Abe K."/>
        </authorList>
    </citation>
    <scope>NUCLEOTIDE SEQUENCE [MRNA]</scope>
    <scope>FUNCTION</scope>
    <scope>SUBCELLULAR LOCATION</scope>
    <scope>TISSUE SPECIFICITY</scope>
    <source>
        <strain>Sprague-Dawley</strain>
        <tissue>Kidney</tissue>
    </source>
</reference>
<reference key="2">
    <citation type="journal article" date="1994" name="Biochem. Biophys. Res. Commun.">
        <title>Two isoforms of the rat kidney EP3 receptor derived by alternative RNA splicing: intrarenal expression co-localization.</title>
        <authorList>
            <person name="Takeuchi K."/>
            <person name="Takahashi N."/>
            <person name="Abe T."/>
            <person name="Abe K."/>
        </authorList>
    </citation>
    <scope>NUCLEOTIDE SEQUENCE [MRNA] (ISOFORMS ALPHA AND GAMMA)</scope>
    <source>
        <strain>Sprague-Dawley</strain>
        <tissue>Kidney</tissue>
    </source>
</reference>
<reference key="3">
    <citation type="journal article" date="1994" name="FEBS Lett.">
        <title>Molecular cloning and expression of a prostaglandin E2 receptor of the EP3 beta subtype from rat hepatocytes.</title>
        <authorList>
            <person name="Neuschaefer-Rube F."/>
            <person name="de Vries C."/>
            <person name="Haenecke K."/>
            <person name="Jungermann K."/>
            <person name="Pueschel G.P."/>
        </authorList>
    </citation>
    <scope>NUCLEOTIDE SEQUENCE [MRNA] (ISOFORMS ALPHA AND BETA)</scope>
    <source>
        <tissue>Hepatocyte</tissue>
    </source>
</reference>
<reference key="4">
    <citation type="journal article" date="1996" name="Brain Res.">
        <title>Expression pattern of messenger RNAs for prostanoid receptors in glial cell cultures.</title>
        <authorList>
            <person name="Kitanaka J."/>
            <person name="Hashimoto H."/>
            <person name="Gotoh M."/>
            <person name="Kondo K."/>
            <person name="Sakata K."/>
            <person name="Hirasawa Y."/>
            <person name="Sawada M."/>
            <person name="Suzumura A."/>
            <person name="Marunouchi T."/>
            <person name="Matsuda T."/>
            <person name="Baba A."/>
        </authorList>
    </citation>
    <scope>NUCLEOTIDE SEQUENCE [MRNA] (ISOFORM BETA)</scope>
    <scope>TISSUE SPECIFICITY</scope>
    <source>
        <strain>Sprague-Dawley</strain>
        <tissue>Brain cortex</tissue>
    </source>
</reference>
<reference key="5">
    <citation type="journal article" date="2000" name="Biochem. Biophys. Res. Commun.">
        <title>Receptor isoform-specific interaction of prostaglandin EP3 receptor with muskelin.</title>
        <authorList>
            <person name="Hasegawa H."/>
            <person name="Katoh H."/>
            <person name="Fujita H."/>
            <person name="Mori K."/>
            <person name="Negishi M."/>
        </authorList>
    </citation>
    <scope>FUNCTION</scope>
    <scope>INTERACTION WITH MKLN1 (ISOFORM ALPHA)</scope>
    <scope>SUBCELLULAR LOCATION</scope>
</reference>
<sequence>MAGVWAPEHSVEAHSNQSSAADGCGSVSVAFPITMMVTGFVGNALAMLLVVRSYRRRESKRKKSFLLCIGWLALTDLVGQLLTSPVVILVYLSQRRWEQLDPSGRLCTFFGLTMTVFGLSSLLVASAMAVERALAIRAPHWYASHMKTRATPVLLGVWLSVLAFALLPVLGVGRYSVQWPGTWCFISTGPAGNETDSAREPGSVAFASAFACLGLLALVVTFACNLATIKALVSRCRAKAAASQSSAQWGRITTETAIQLMGIMCVLSVCWSPLLIMMLKMIFNQMSVEQCKTQMGKEKECNSFLIAVRLASLNQILDPWVYLLLRKILLRKFCQIRDHTNYASSSTSLPCPGSSVLMWSDQLER</sequence>
<comment type="function">
    <text evidence="1 4 5">Receptor for prostaglandin E2 (PGE2) (PubMed:11006128, PubMed:8393672). Required for normal development of fever in response to pyrinogens, including IL1B, prostaglandin E2 and bacterial lipopolysaccharide (LPS). Required for normal potentiation of platelet aggregation by prostaglandin E2, and thus plays a role in the regulation of blood coagulation. Required for increased HCO3(-) secretion in the duodenum in response to mucosal acidification, and thereby contributes to the protection of the mucosa against acid-induced ulceration. Not required for normal kidney function, normal urine volume and osmolality (By similarity).</text>
</comment>
<comment type="function">
    <molecule>Isoform Alpha</molecule>
    <text evidence="4">Receptor for prostaglandin E2 (PGE2); ligand binding activates a signaling cascade via G(i) proteins that leads to the inhibition of adenylate cyclase.</text>
</comment>
<comment type="function">
    <molecule>Isoform Gamma</molecule>
    <text evidence="1">Receptor for prostaglandin E2 (PGE2); ligand binding can activate several distinct signaling cascades, resulting in activation or inhibition of adenylate cyclase.</text>
</comment>
<comment type="subunit">
    <molecule>Isoform Alpha</molecule>
    <text evidence="4">Interacts (via C-terminus) with MKLN1 (PubMed:11006128).</text>
</comment>
<comment type="subunit">
    <molecule>Isoform Beta</molecule>
    <text evidence="4">Does not interact with MKLN1 (PubMed:11006128).</text>
</comment>
<comment type="subunit">
    <molecule>Isoform Gamma</molecule>
    <text evidence="4">Does not interact with MKLN1 (PubMed:11006128).</text>
</comment>
<comment type="subcellular location">
    <subcellularLocation>
        <location evidence="4 5">Cell membrane</location>
        <topology evidence="10">Multi-pass membrane protein</topology>
    </subcellularLocation>
</comment>
<comment type="alternative products">
    <event type="alternative splicing"/>
    <isoform>
        <id>P34980-1</id>
        <name>Alpha</name>
        <sequence type="displayed"/>
    </isoform>
    <isoform>
        <id>P34980-2</id>
        <name>Beta</name>
        <sequence type="described" ref="VSP_001949"/>
    </isoform>
    <isoform>
        <id>P34980-3</id>
        <name>Gamma</name>
        <sequence type="described" ref="VSP_001950"/>
    </isoform>
    <text>Additional isoforms seem to exist. Isoforms have identical ligand binding properties but different coupling properties with G proteins: isoform Alpha and isoform Beta couple to G(i) proteins, whereas isoform Gamma couples to multiple G proteins, G(i) and G(s).</text>
</comment>
<comment type="tissue specificity">
    <text evidence="5 6">Principally expressed in the tubules of the renal medulla. Specific expression is seen in medullary and cortical thick ascending limbs; lower levels are detected in cortical and inner medullary collecting ducts. Not detected significantly in the glomeruli (PubMed:8393672). In the brain, expressed in all types of glial cells (PubMed:8919306).</text>
</comment>
<comment type="similarity">
    <text evidence="3">Belongs to the G-protein coupled receptor 1 family.</text>
</comment>
<protein>
    <recommendedName>
        <fullName>Prostaglandin E2 receptor EP3 subtype</fullName>
        <shortName>PGE receptor EP3 subtype</shortName>
        <shortName>PGE2 receptor EP3 subtype</shortName>
    </recommendedName>
    <alternativeName>
        <fullName>Prostanoid EP3 receptor</fullName>
    </alternativeName>
</protein>
<dbReference type="EMBL" id="D14869">
    <property type="protein sequence ID" value="BAA03585.1"/>
    <property type="molecule type" value="mRNA"/>
</dbReference>
<dbReference type="EMBL" id="D16443">
    <property type="protein sequence ID" value="BAA03912.1"/>
    <property type="molecule type" value="mRNA"/>
</dbReference>
<dbReference type="EMBL" id="X80133">
    <property type="protein sequence ID" value="CAA56432.1"/>
    <property type="molecule type" value="mRNA"/>
</dbReference>
<dbReference type="EMBL" id="D29969">
    <property type="protein sequence ID" value="BAA06236.1"/>
    <property type="molecule type" value="mRNA"/>
</dbReference>
<dbReference type="EMBL" id="X83855">
    <property type="protein sequence ID" value="CAA58735.1"/>
    <property type="molecule type" value="mRNA"/>
</dbReference>
<dbReference type="PIR" id="JN0693">
    <property type="entry name" value="JN0693"/>
</dbReference>
<dbReference type="PIR" id="S48689">
    <property type="entry name" value="S48689"/>
</dbReference>
<dbReference type="PIR" id="S51280">
    <property type="entry name" value="S51280"/>
</dbReference>
<dbReference type="RefSeq" id="NP_036836.1">
    <property type="nucleotide sequence ID" value="NM_012704.1"/>
</dbReference>
<dbReference type="SMR" id="P34980"/>
<dbReference type="FunCoup" id="P34980">
    <property type="interactions" value="617"/>
</dbReference>
<dbReference type="STRING" id="10116.ENSRNOP00000014034"/>
<dbReference type="BindingDB" id="P34980"/>
<dbReference type="ChEMBL" id="CHEMBL5674"/>
<dbReference type="DrugCentral" id="P34980"/>
<dbReference type="GuidetoPHARMACOLOGY" id="342"/>
<dbReference type="GlyCosmos" id="P34980">
    <property type="glycosylation" value="2 sites, No reported glycans"/>
</dbReference>
<dbReference type="GlyGen" id="P34980">
    <property type="glycosylation" value="2 sites"/>
</dbReference>
<dbReference type="PhosphoSitePlus" id="P34980"/>
<dbReference type="PaxDb" id="10116-ENSRNOP00000014034"/>
<dbReference type="DNASU" id="24929"/>
<dbReference type="GeneID" id="24929"/>
<dbReference type="KEGG" id="rno:24929"/>
<dbReference type="AGR" id="RGD:3435"/>
<dbReference type="CTD" id="5733"/>
<dbReference type="RGD" id="3435">
    <property type="gene designation" value="Ptger3"/>
</dbReference>
<dbReference type="eggNOG" id="KOG3656">
    <property type="taxonomic scope" value="Eukaryota"/>
</dbReference>
<dbReference type="InParanoid" id="P34980"/>
<dbReference type="OrthoDB" id="5959154at2759"/>
<dbReference type="PhylomeDB" id="P34980"/>
<dbReference type="Reactome" id="R-RNO-391908">
    <property type="pathway name" value="Prostanoid ligand receptors"/>
</dbReference>
<dbReference type="Reactome" id="R-RNO-418594">
    <property type="pathway name" value="G alpha (i) signalling events"/>
</dbReference>
<dbReference type="PRO" id="PR:P34980"/>
<dbReference type="Proteomes" id="UP000002494">
    <property type="component" value="Unplaced"/>
</dbReference>
<dbReference type="GO" id="GO:0031526">
    <property type="term" value="C:brush border membrane"/>
    <property type="evidence" value="ECO:0000314"/>
    <property type="project" value="RGD"/>
</dbReference>
<dbReference type="GO" id="GO:0009986">
    <property type="term" value="C:cell surface"/>
    <property type="evidence" value="ECO:0000314"/>
    <property type="project" value="RGD"/>
</dbReference>
<dbReference type="GO" id="GO:0043025">
    <property type="term" value="C:neuronal cell body"/>
    <property type="evidence" value="ECO:0000314"/>
    <property type="project" value="RGD"/>
</dbReference>
<dbReference type="GO" id="GO:0031965">
    <property type="term" value="C:nuclear membrane"/>
    <property type="evidence" value="ECO:0000314"/>
    <property type="project" value="RGD"/>
</dbReference>
<dbReference type="GO" id="GO:0005886">
    <property type="term" value="C:plasma membrane"/>
    <property type="evidence" value="ECO:0000266"/>
    <property type="project" value="RGD"/>
</dbReference>
<dbReference type="GO" id="GO:1990769">
    <property type="term" value="C:proximal neuron projection"/>
    <property type="evidence" value="ECO:0000314"/>
    <property type="project" value="RGD"/>
</dbReference>
<dbReference type="GO" id="GO:0004957">
    <property type="term" value="F:prostaglandin E receptor activity"/>
    <property type="evidence" value="ECO:0000314"/>
    <property type="project" value="RGD"/>
</dbReference>
<dbReference type="GO" id="GO:0007189">
    <property type="term" value="P:adenylate cyclase-activating G protein-coupled receptor signaling pathway"/>
    <property type="evidence" value="ECO:0000318"/>
    <property type="project" value="GO_Central"/>
</dbReference>
<dbReference type="GO" id="GO:0007188">
    <property type="term" value="P:adenylate cyclase-modulating G protein-coupled receptor signaling pathway"/>
    <property type="evidence" value="ECO:0000266"/>
    <property type="project" value="RGD"/>
</dbReference>
<dbReference type="GO" id="GO:0015701">
    <property type="term" value="P:bicarbonate transport"/>
    <property type="evidence" value="ECO:0000266"/>
    <property type="project" value="RGD"/>
</dbReference>
<dbReference type="GO" id="GO:0006171">
    <property type="term" value="P:cAMP biosynthetic process"/>
    <property type="evidence" value="ECO:0000315"/>
    <property type="project" value="RGD"/>
</dbReference>
<dbReference type="GO" id="GO:0141156">
    <property type="term" value="P:cAMP/PKA signal transduction"/>
    <property type="evidence" value="ECO:0000315"/>
    <property type="project" value="RGD"/>
</dbReference>
<dbReference type="GO" id="GO:1904322">
    <property type="term" value="P:cellular response to forskolin"/>
    <property type="evidence" value="ECO:0000315"/>
    <property type="project" value="RGD"/>
</dbReference>
<dbReference type="GO" id="GO:0071347">
    <property type="term" value="P:cellular response to interleukin-1"/>
    <property type="evidence" value="ECO:0000270"/>
    <property type="project" value="RGD"/>
</dbReference>
<dbReference type="GO" id="GO:0071222">
    <property type="term" value="P:cellular response to lipopolysaccharide"/>
    <property type="evidence" value="ECO:0000270"/>
    <property type="project" value="RGD"/>
</dbReference>
<dbReference type="GO" id="GO:0071380">
    <property type="term" value="P:cellular response to prostaglandin E stimulus"/>
    <property type="evidence" value="ECO:0000315"/>
    <property type="project" value="RGD"/>
</dbReference>
<dbReference type="GO" id="GO:0002029">
    <property type="term" value="P:desensitization of G protein-coupled receptor signaling pathway"/>
    <property type="evidence" value="ECO:0000315"/>
    <property type="project" value="RGD"/>
</dbReference>
<dbReference type="GO" id="GO:0007565">
    <property type="term" value="P:female pregnancy"/>
    <property type="evidence" value="ECO:0000270"/>
    <property type="project" value="RGD"/>
</dbReference>
<dbReference type="GO" id="GO:0001660">
    <property type="term" value="P:fever generation"/>
    <property type="evidence" value="ECO:0000266"/>
    <property type="project" value="RGD"/>
</dbReference>
<dbReference type="GO" id="GO:0006954">
    <property type="term" value="P:inflammatory response"/>
    <property type="evidence" value="ECO:0000318"/>
    <property type="project" value="GO_Central"/>
</dbReference>
<dbReference type="GO" id="GO:0014827">
    <property type="term" value="P:intestine smooth muscle contraction"/>
    <property type="evidence" value="ECO:0000315"/>
    <property type="project" value="RGD"/>
</dbReference>
<dbReference type="GO" id="GO:0060137">
    <property type="term" value="P:maternal process involved in parturition"/>
    <property type="evidence" value="ECO:0000270"/>
    <property type="project" value="RGD"/>
</dbReference>
<dbReference type="GO" id="GO:0106072">
    <property type="term" value="P:negative regulation of adenylate cyclase-activating G protein-coupled receptor signaling pathway"/>
    <property type="evidence" value="ECO:0000315"/>
    <property type="project" value="RGD"/>
</dbReference>
<dbReference type="GO" id="GO:1903170">
    <property type="term" value="P:negative regulation of calcium ion transmembrane transport"/>
    <property type="evidence" value="ECO:0000315"/>
    <property type="project" value="RGD"/>
</dbReference>
<dbReference type="GO" id="GO:1904326">
    <property type="term" value="P:negative regulation of circadian sleep/wake cycle, wakefulness"/>
    <property type="evidence" value="ECO:0000315"/>
    <property type="project" value="RGD"/>
</dbReference>
<dbReference type="GO" id="GO:2000978">
    <property type="term" value="P:negative regulation of forebrain neuron differentiation"/>
    <property type="evidence" value="ECO:0000315"/>
    <property type="project" value="RGD"/>
</dbReference>
<dbReference type="GO" id="GO:0060455">
    <property type="term" value="P:negative regulation of gastric acid secretion"/>
    <property type="evidence" value="ECO:0000318"/>
    <property type="project" value="GO_Central"/>
</dbReference>
<dbReference type="GO" id="GO:1903640">
    <property type="term" value="P:negative regulation of gastrin-induced gastric acid secretion"/>
    <property type="evidence" value="ECO:0000315"/>
    <property type="project" value="RGD"/>
</dbReference>
<dbReference type="GO" id="GO:0046676">
    <property type="term" value="P:negative regulation of insulin secretion"/>
    <property type="evidence" value="ECO:0000314"/>
    <property type="project" value="RGD"/>
</dbReference>
<dbReference type="GO" id="GO:0010700">
    <property type="term" value="P:negative regulation of norepinephrine secretion"/>
    <property type="evidence" value="ECO:0000315"/>
    <property type="project" value="RGD"/>
</dbReference>
<dbReference type="GO" id="GO:1901380">
    <property type="term" value="P:negative regulation of potassium ion transmembrane transport"/>
    <property type="evidence" value="ECO:0000315"/>
    <property type="project" value="RGD"/>
</dbReference>
<dbReference type="GO" id="GO:1904348">
    <property type="term" value="P:negative regulation of small intestine smooth muscle contraction"/>
    <property type="evidence" value="ECO:0000314"/>
    <property type="project" value="RGD"/>
</dbReference>
<dbReference type="GO" id="GO:0007200">
    <property type="term" value="P:phospholipase C-activating G protein-coupled receptor signaling pathway"/>
    <property type="evidence" value="ECO:0000266"/>
    <property type="project" value="RGD"/>
</dbReference>
<dbReference type="GO" id="GO:1904364">
    <property type="term" value="P:positive regulation of calcitonin secretion"/>
    <property type="evidence" value="ECO:0000315"/>
    <property type="project" value="RGD"/>
</dbReference>
<dbReference type="GO" id="GO:0046010">
    <property type="term" value="P:positive regulation of circadian sleep/wake cycle, non-REM sleep"/>
    <property type="evidence" value="ECO:0000315"/>
    <property type="project" value="RGD"/>
</dbReference>
<dbReference type="GO" id="GO:1904343">
    <property type="term" value="P:positive regulation of colon smooth muscle contraction"/>
    <property type="evidence" value="ECO:0000315"/>
    <property type="project" value="RGD"/>
</dbReference>
<dbReference type="GO" id="GO:0007204">
    <property type="term" value="P:positive regulation of cytosolic calcium ion concentration"/>
    <property type="evidence" value="ECO:0000315"/>
    <property type="project" value="RGD"/>
</dbReference>
<dbReference type="GO" id="GO:0031622">
    <property type="term" value="P:positive regulation of fever generation"/>
    <property type="evidence" value="ECO:0000266"/>
    <property type="project" value="RGD"/>
</dbReference>
<dbReference type="GO" id="GO:1904346">
    <property type="term" value="P:positive regulation of gastric mucosal blood circulation"/>
    <property type="evidence" value="ECO:0000315"/>
    <property type="project" value="RGD"/>
</dbReference>
<dbReference type="GO" id="GO:0010628">
    <property type="term" value="P:positive regulation of gene expression"/>
    <property type="evidence" value="ECO:0000315"/>
    <property type="project" value="RGD"/>
</dbReference>
<dbReference type="GO" id="GO:0070257">
    <property type="term" value="P:positive regulation of mucus secretion"/>
    <property type="evidence" value="ECO:0000314"/>
    <property type="project" value="RGD"/>
</dbReference>
<dbReference type="GO" id="GO:1904330">
    <property type="term" value="P:positive regulation of myofibroblast contraction"/>
    <property type="evidence" value="ECO:0000315"/>
    <property type="project" value="RGD"/>
</dbReference>
<dbReference type="GO" id="GO:2000391">
    <property type="term" value="P:positive regulation of neutrophil extravasation"/>
    <property type="evidence" value="ECO:0000315"/>
    <property type="project" value="RGD"/>
</dbReference>
<dbReference type="GO" id="GO:1904320">
    <property type="term" value="P:positive regulation of smooth muscle contraction involved in micturition"/>
    <property type="evidence" value="ECO:0000315"/>
    <property type="project" value="RGD"/>
</dbReference>
<dbReference type="GO" id="GO:1904460">
    <property type="term" value="P:positive regulation of substance P secretion"/>
    <property type="evidence" value="ECO:0000315"/>
    <property type="project" value="RGD"/>
</dbReference>
<dbReference type="GO" id="GO:0035810">
    <property type="term" value="P:positive regulation of urine volume"/>
    <property type="evidence" value="ECO:0000266"/>
    <property type="project" value="RGD"/>
</dbReference>
<dbReference type="GO" id="GO:0045907">
    <property type="term" value="P:positive regulation of vasoconstriction"/>
    <property type="evidence" value="ECO:0000315"/>
    <property type="project" value="RGD"/>
</dbReference>
<dbReference type="GO" id="GO:1990767">
    <property type="term" value="P:prostaglandin receptor internalization"/>
    <property type="evidence" value="ECO:0000315"/>
    <property type="project" value="RGD"/>
</dbReference>
<dbReference type="GO" id="GO:0031623">
    <property type="term" value="P:receptor internalization"/>
    <property type="evidence" value="ECO:0000315"/>
    <property type="project" value="RGD"/>
</dbReference>
<dbReference type="GO" id="GO:0010840">
    <property type="term" value="P:regulation of circadian sleep/wake cycle, wakefulness"/>
    <property type="evidence" value="ECO:0000315"/>
    <property type="project" value="RGD"/>
</dbReference>
<dbReference type="GO" id="GO:0014061">
    <property type="term" value="P:regulation of norepinephrine secretion"/>
    <property type="evidence" value="ECO:0000315"/>
    <property type="project" value="RGD"/>
</dbReference>
<dbReference type="GO" id="GO:0032355">
    <property type="term" value="P:response to estradiol"/>
    <property type="evidence" value="ECO:0000270"/>
    <property type="project" value="RGD"/>
</dbReference>
<dbReference type="GO" id="GO:0032496">
    <property type="term" value="P:response to lipopolysaccharide"/>
    <property type="evidence" value="ECO:0000266"/>
    <property type="project" value="RGD"/>
</dbReference>
<dbReference type="GO" id="GO:0032570">
    <property type="term" value="P:response to progesterone"/>
    <property type="evidence" value="ECO:0000270"/>
    <property type="project" value="RGD"/>
</dbReference>
<dbReference type="GO" id="GO:1902074">
    <property type="term" value="P:response to salt"/>
    <property type="evidence" value="ECO:0000270"/>
    <property type="project" value="RGD"/>
</dbReference>
<dbReference type="GO" id="GO:0014832">
    <property type="term" value="P:urinary bladder smooth muscle contraction"/>
    <property type="evidence" value="ECO:0000315"/>
    <property type="project" value="RGD"/>
</dbReference>
<dbReference type="FunFam" id="1.20.1070.10:FF:000087">
    <property type="entry name" value="prostaglandin E2 receptor EP3 subtype"/>
    <property type="match status" value="1"/>
</dbReference>
<dbReference type="Gene3D" id="1.20.1070.10">
    <property type="entry name" value="Rhodopsin 7-helix transmembrane proteins"/>
    <property type="match status" value="1"/>
</dbReference>
<dbReference type="InterPro" id="IPR000154">
    <property type="entry name" value="EP3_rcpt_3"/>
</dbReference>
<dbReference type="InterPro" id="IPR000276">
    <property type="entry name" value="GPCR_Rhodpsn"/>
</dbReference>
<dbReference type="InterPro" id="IPR017452">
    <property type="entry name" value="GPCR_Rhodpsn_7TM"/>
</dbReference>
<dbReference type="InterPro" id="IPR008365">
    <property type="entry name" value="Prostanoid_rcpt"/>
</dbReference>
<dbReference type="InterPro" id="IPR001244">
    <property type="entry name" value="Prostglndn_DP_rcpt"/>
</dbReference>
<dbReference type="InterPro" id="IPR000265">
    <property type="entry name" value="Prostglndn_EP3_rcpt"/>
</dbReference>
<dbReference type="PANTHER" id="PTHR11866">
    <property type="entry name" value="G-PROTEIN COUPLED RECEPTOR FAMILY 1 MEMBER"/>
    <property type="match status" value="1"/>
</dbReference>
<dbReference type="PANTHER" id="PTHR11866:SF10">
    <property type="entry name" value="PROSTAGLANDIN E2 RECEPTOR EP3 SUBTYPE"/>
    <property type="match status" value="1"/>
</dbReference>
<dbReference type="Pfam" id="PF00001">
    <property type="entry name" value="7tm_1"/>
    <property type="match status" value="1"/>
</dbReference>
<dbReference type="PRINTS" id="PR00237">
    <property type="entry name" value="GPCRRHODOPSN"/>
</dbReference>
<dbReference type="PRINTS" id="PR00428">
    <property type="entry name" value="PROSTAGLNDNR"/>
</dbReference>
<dbReference type="PRINTS" id="PR01788">
    <property type="entry name" value="PROSTANOIDR"/>
</dbReference>
<dbReference type="PRINTS" id="PR00585">
    <property type="entry name" value="PRSTNOIDE33R"/>
</dbReference>
<dbReference type="PRINTS" id="PR00582">
    <property type="entry name" value="PRSTNOIDEP3R"/>
</dbReference>
<dbReference type="SUPFAM" id="SSF81321">
    <property type="entry name" value="Family A G protein-coupled receptor-like"/>
    <property type="match status" value="1"/>
</dbReference>
<dbReference type="PROSITE" id="PS50262">
    <property type="entry name" value="G_PROTEIN_RECEP_F1_2"/>
    <property type="match status" value="1"/>
</dbReference>
<organism>
    <name type="scientific">Rattus norvegicus</name>
    <name type="common">Rat</name>
    <dbReference type="NCBI Taxonomy" id="10116"/>
    <lineage>
        <taxon>Eukaryota</taxon>
        <taxon>Metazoa</taxon>
        <taxon>Chordata</taxon>
        <taxon>Craniata</taxon>
        <taxon>Vertebrata</taxon>
        <taxon>Euteleostomi</taxon>
        <taxon>Mammalia</taxon>
        <taxon>Eutheria</taxon>
        <taxon>Euarchontoglires</taxon>
        <taxon>Glires</taxon>
        <taxon>Rodentia</taxon>
        <taxon>Myomorpha</taxon>
        <taxon>Muroidea</taxon>
        <taxon>Muridae</taxon>
        <taxon>Murinae</taxon>
        <taxon>Rattus</taxon>
    </lineage>
</organism>
<keyword id="KW-0025">Alternative splicing</keyword>
<keyword id="KW-1003">Cell membrane</keyword>
<keyword id="KW-1015">Disulfide bond</keyword>
<keyword id="KW-0297">G-protein coupled receptor</keyword>
<keyword id="KW-0325">Glycoprotein</keyword>
<keyword id="KW-0449">Lipoprotein</keyword>
<keyword id="KW-0472">Membrane</keyword>
<keyword id="KW-0564">Palmitate</keyword>
<keyword id="KW-0675">Receptor</keyword>
<keyword id="KW-1185">Reference proteome</keyword>
<keyword id="KW-0807">Transducer</keyword>
<keyword id="KW-0812">Transmembrane</keyword>
<keyword id="KW-1133">Transmembrane helix</keyword>
<evidence type="ECO:0000250" key="1">
    <source>
        <dbReference type="UniProtKB" id="P30557"/>
    </source>
</evidence>
<evidence type="ECO:0000255" key="2"/>
<evidence type="ECO:0000255" key="3">
    <source>
        <dbReference type="PROSITE-ProRule" id="PRU00521"/>
    </source>
</evidence>
<evidence type="ECO:0000269" key="4">
    <source>
    </source>
</evidence>
<evidence type="ECO:0000269" key="5">
    <source>
    </source>
</evidence>
<evidence type="ECO:0000269" key="6">
    <source>
    </source>
</evidence>
<evidence type="ECO:0000303" key="7">
    <source>
    </source>
</evidence>
<evidence type="ECO:0000303" key="8">
    <source>
    </source>
</evidence>
<evidence type="ECO:0000303" key="9">
    <source>
    </source>
</evidence>
<evidence type="ECO:0000305" key="10"/>
<accession>P34980</accession>
<accession>Q63194</accession>
<accession>Q64376</accession>
<gene>
    <name type="primary">Ptger3</name>
</gene>